<protein>
    <recommendedName>
        <fullName>Glucose-repressible gene protein</fullName>
    </recommendedName>
</protein>
<feature type="chain" id="PRO_0000083847" description="Glucose-repressible gene protein">
    <location>
        <begin position="1"/>
        <end position="71"/>
    </location>
</feature>
<feature type="region of interest" description="Disordered" evidence="1">
    <location>
        <begin position="19"/>
        <end position="71"/>
    </location>
</feature>
<feature type="compositionally biased region" description="Basic and acidic residues" evidence="1">
    <location>
        <begin position="49"/>
        <end position="71"/>
    </location>
</feature>
<organism>
    <name type="scientific">Neurospora crassa (strain ATCC 24698 / 74-OR23-1A / CBS 708.71 / DSM 1257 / FGSC 987)</name>
    <dbReference type="NCBI Taxonomy" id="367110"/>
    <lineage>
        <taxon>Eukaryota</taxon>
        <taxon>Fungi</taxon>
        <taxon>Dikarya</taxon>
        <taxon>Ascomycota</taxon>
        <taxon>Pezizomycotina</taxon>
        <taxon>Sordariomycetes</taxon>
        <taxon>Sordariomycetidae</taxon>
        <taxon>Sordariales</taxon>
        <taxon>Sordariaceae</taxon>
        <taxon>Neurospora</taxon>
    </lineage>
</organism>
<evidence type="ECO:0000256" key="1">
    <source>
        <dbReference type="SAM" id="MobiDB-lite"/>
    </source>
</evidence>
<proteinExistence type="evidence at transcript level"/>
<gene>
    <name type="primary">grg-1</name>
    <name type="synonym">ccg-1</name>
    <name type="ORF">93G11.200</name>
    <name type="ORF">NCU03753</name>
</gene>
<sequence>MDTLKNAANYVGDKVQGATATASKEANKDVAKDSNQGVGTRLNAAGDAISDKVSENKHDAKAEAHKQGATH</sequence>
<comment type="induction">
    <text>Grg-1 message levels were found to increase within minutes following the onset of glucose deprivation and rise 50 fold during the first 90 minutes of derepression.</text>
</comment>
<name>GRG1_NEUCR</name>
<keyword id="KW-1185">Reference proteome</keyword>
<accession>P22151</accession>
<accession>Q7S7P6</accession>
<reference key="1">
    <citation type="journal article" date="1988" name="Curr. Genet.">
        <title>Isolation and characterization of a Neurospora glucose-repressible gene.</title>
        <authorList>
            <person name="McNally M.T."/>
            <person name="Free S.J."/>
        </authorList>
    </citation>
    <scope>NUCLEOTIDE SEQUENCE [GENOMIC DNA]</scope>
    <source>
        <strain>ATCC 24698 / 74-OR23-1A / CBS 708.71 / DSM 1257 / FGSC 987</strain>
    </source>
</reference>
<reference key="2">
    <citation type="submission" date="1993-07" db="EMBL/GenBank/DDBJ databases">
        <title>Ccg-1, a morning specific gene, is grg-1, a glucose repressed gene.</title>
        <authorList>
            <person name="Lindgren K.M."/>
            <person name="Dunlap J.C."/>
            <person name="Loros J.J."/>
        </authorList>
    </citation>
    <scope>NUCLEOTIDE SEQUENCE [GENOMIC DNA]</scope>
    <source>
        <strain>bdA 30-1</strain>
    </source>
</reference>
<reference key="3">
    <citation type="journal article" date="2003" name="Nucleic Acids Res.">
        <title>What's in the genome of a filamentous fungus? Analysis of the Neurospora genome sequence.</title>
        <authorList>
            <person name="Mannhaupt G."/>
            <person name="Montrone C."/>
            <person name="Haase D."/>
            <person name="Mewes H.-W."/>
            <person name="Aign V."/>
            <person name="Hoheisel J.D."/>
            <person name="Fartmann B."/>
            <person name="Nyakatura G."/>
            <person name="Kempken F."/>
            <person name="Maier J."/>
            <person name="Schulte U."/>
        </authorList>
    </citation>
    <scope>NUCLEOTIDE SEQUENCE [LARGE SCALE GENOMIC DNA]</scope>
    <source>
        <strain>ATCC 24698 / 74-OR23-1A / CBS 708.71 / DSM 1257 / FGSC 987</strain>
    </source>
</reference>
<reference key="4">
    <citation type="journal article" date="2003" name="Nature">
        <title>The genome sequence of the filamentous fungus Neurospora crassa.</title>
        <authorList>
            <person name="Galagan J.E."/>
            <person name="Calvo S.E."/>
            <person name="Borkovich K.A."/>
            <person name="Selker E.U."/>
            <person name="Read N.D."/>
            <person name="Jaffe D.B."/>
            <person name="FitzHugh W."/>
            <person name="Ma L.-J."/>
            <person name="Smirnov S."/>
            <person name="Purcell S."/>
            <person name="Rehman B."/>
            <person name="Elkins T."/>
            <person name="Engels R."/>
            <person name="Wang S."/>
            <person name="Nielsen C.B."/>
            <person name="Butler J."/>
            <person name="Endrizzi M."/>
            <person name="Qui D."/>
            <person name="Ianakiev P."/>
            <person name="Bell-Pedersen D."/>
            <person name="Nelson M.A."/>
            <person name="Werner-Washburne M."/>
            <person name="Selitrennikoff C.P."/>
            <person name="Kinsey J.A."/>
            <person name="Braun E.L."/>
            <person name="Zelter A."/>
            <person name="Schulte U."/>
            <person name="Kothe G.O."/>
            <person name="Jedd G."/>
            <person name="Mewes H.-W."/>
            <person name="Staben C."/>
            <person name="Marcotte E."/>
            <person name="Greenberg D."/>
            <person name="Roy A."/>
            <person name="Foley K."/>
            <person name="Naylor J."/>
            <person name="Stange-Thomann N."/>
            <person name="Barrett R."/>
            <person name="Gnerre S."/>
            <person name="Kamal M."/>
            <person name="Kamvysselis M."/>
            <person name="Mauceli E.W."/>
            <person name="Bielke C."/>
            <person name="Rudd S."/>
            <person name="Frishman D."/>
            <person name="Krystofova S."/>
            <person name="Rasmussen C."/>
            <person name="Metzenberg R.L."/>
            <person name="Perkins D.D."/>
            <person name="Kroken S."/>
            <person name="Cogoni C."/>
            <person name="Macino G."/>
            <person name="Catcheside D.E.A."/>
            <person name="Li W."/>
            <person name="Pratt R.J."/>
            <person name="Osmani S.A."/>
            <person name="DeSouza C.P.C."/>
            <person name="Glass N.L."/>
            <person name="Orbach M.J."/>
            <person name="Berglund J.A."/>
            <person name="Voelker R."/>
            <person name="Yarden O."/>
            <person name="Plamann M."/>
            <person name="Seiler S."/>
            <person name="Dunlap J.C."/>
            <person name="Radford A."/>
            <person name="Aramayo R."/>
            <person name="Natvig D.O."/>
            <person name="Alex L.A."/>
            <person name="Mannhaupt G."/>
            <person name="Ebbole D.J."/>
            <person name="Freitag M."/>
            <person name="Paulsen I."/>
            <person name="Sachs M.S."/>
            <person name="Lander E.S."/>
            <person name="Nusbaum C."/>
            <person name="Birren B.W."/>
        </authorList>
    </citation>
    <scope>NUCLEOTIDE SEQUENCE [LARGE SCALE GENOMIC DNA]</scope>
    <source>
        <strain>ATCC 24698 / 74-OR23-1A / CBS 708.71 / DSM 1257 / FGSC 987</strain>
    </source>
</reference>
<dbReference type="EMBL" id="X14801">
    <property type="protein sequence ID" value="CAA32907.1"/>
    <property type="molecule type" value="Genomic_DNA"/>
</dbReference>
<dbReference type="EMBL" id="L14464">
    <property type="status" value="NOT_ANNOTATED_CDS"/>
    <property type="molecule type" value="Genomic_DNA"/>
</dbReference>
<dbReference type="EMBL" id="AL513443">
    <property type="protein sequence ID" value="CAC28672.1"/>
    <property type="molecule type" value="Genomic_DNA"/>
</dbReference>
<dbReference type="EMBL" id="CM002240">
    <property type="protein sequence ID" value="EAA31864.1"/>
    <property type="molecule type" value="Genomic_DNA"/>
</dbReference>
<dbReference type="PIR" id="T50483">
    <property type="entry name" value="T50483"/>
</dbReference>
<dbReference type="RefSeq" id="XP_961100.1">
    <property type="nucleotide sequence ID" value="XM_956007.2"/>
</dbReference>
<dbReference type="STRING" id="367110.P22151"/>
<dbReference type="PaxDb" id="5141-EFNCRP00000003475"/>
<dbReference type="EnsemblFungi" id="EAA31864">
    <property type="protein sequence ID" value="EAA31864"/>
    <property type="gene ID" value="NCU03753"/>
</dbReference>
<dbReference type="GeneID" id="3877247"/>
<dbReference type="KEGG" id="ncr:NCU03753"/>
<dbReference type="VEuPathDB" id="FungiDB:NCU03753"/>
<dbReference type="HOGENOM" id="CLU_179513_0_0_1"/>
<dbReference type="InParanoid" id="P22151"/>
<dbReference type="OMA" id="GHNAKAD"/>
<dbReference type="OrthoDB" id="10039103at2759"/>
<dbReference type="Proteomes" id="UP000001805">
    <property type="component" value="Chromosome 2, Linkage Group V"/>
</dbReference>
<dbReference type="InterPro" id="IPR020100">
    <property type="entry name" value="Glc-repressible_Grg1"/>
</dbReference>
<dbReference type="PANTHER" id="PTHR38789:SF1">
    <property type="entry name" value="GLUCOSE-REPRESSIBLE GENE PROTEIN-RELATED"/>
    <property type="match status" value="1"/>
</dbReference>
<dbReference type="PANTHER" id="PTHR38789">
    <property type="entry name" value="REPRESSIBLE PROTEIN GRG1, PUTATIVE (AFU_ORTHOLOGUE AFUA_5G14210)-RELATED"/>
    <property type="match status" value="1"/>
</dbReference>
<dbReference type="Pfam" id="PF11034">
    <property type="entry name" value="Grg1"/>
    <property type="match status" value="1"/>
</dbReference>